<comment type="catalytic activity">
    <reaction evidence="1">
        <text>L-homoserine + ATP = O-phospho-L-homoserine + ADP + H(+)</text>
        <dbReference type="Rhea" id="RHEA:13985"/>
        <dbReference type="ChEBI" id="CHEBI:15378"/>
        <dbReference type="ChEBI" id="CHEBI:30616"/>
        <dbReference type="ChEBI" id="CHEBI:57476"/>
        <dbReference type="ChEBI" id="CHEBI:57590"/>
        <dbReference type="ChEBI" id="CHEBI:456216"/>
        <dbReference type="EC" id="2.7.1.39"/>
    </reaction>
</comment>
<comment type="pathway">
    <text evidence="1">Amino-acid biosynthesis; L-threonine biosynthesis; L-threonine from L-aspartate: step 4/5.</text>
</comment>
<comment type="similarity">
    <text evidence="1">Belongs to the pseudomonas-type ThrB family.</text>
</comment>
<protein>
    <recommendedName>
        <fullName evidence="1">Homoserine kinase</fullName>
        <shortName evidence="1">HK</shortName>
        <shortName evidence="1">HSK</shortName>
        <ecNumber evidence="1">2.7.1.39</ecNumber>
    </recommendedName>
</protein>
<reference key="1">
    <citation type="journal article" date="2010" name="PLoS ONE">
        <title>The complete multipartite genome sequence of Cupriavidus necator JMP134, a versatile pollutant degrader.</title>
        <authorList>
            <person name="Lykidis A."/>
            <person name="Perez-Pantoja D."/>
            <person name="Ledger T."/>
            <person name="Mavromatis K."/>
            <person name="Anderson I.J."/>
            <person name="Ivanova N.N."/>
            <person name="Hooper S.D."/>
            <person name="Lapidus A."/>
            <person name="Lucas S."/>
            <person name="Gonzalez B."/>
            <person name="Kyrpides N.C."/>
        </authorList>
    </citation>
    <scope>NUCLEOTIDE SEQUENCE [LARGE SCALE GENOMIC DNA]</scope>
    <source>
        <strain>JMP134 / LMG 1197</strain>
    </source>
</reference>
<sequence>MAVFTTVSHDEIASWLLDYDLGEVRELRGIASGIENSNFFLTTEQDGRTREYVLTIFERLTFDQLPYYLHLMAHLATRGITVPAPIPARDGEILRALKGKPATIVTRLPGASQLAPDAEHCAEVGDMLARMHLAGQDYPRQQPNLRSLPWWQQTEAEIVPFLDAQQRTLLQQEIAHQAAFFGSADYAALPGGPCHCDLFRDNALFEEVGGHHRLGGFFDFYFAGNDKWLFDLAVTVNDWCIDLASGELDNARAHAMVQAYHAVRPLSATEAAHWRDMLRAGALRFWVSRLWDFYLPREADMLQPHDPTHFERILRRRLAMTADAAALAWI</sequence>
<evidence type="ECO:0000255" key="1">
    <source>
        <dbReference type="HAMAP-Rule" id="MF_00301"/>
    </source>
</evidence>
<dbReference type="EC" id="2.7.1.39" evidence="1"/>
<dbReference type="EMBL" id="CP000090">
    <property type="protein sequence ID" value="AAZ60249.1"/>
    <property type="molecule type" value="Genomic_DNA"/>
</dbReference>
<dbReference type="SMR" id="Q474D4"/>
<dbReference type="STRING" id="264198.Reut_A0870"/>
<dbReference type="KEGG" id="reu:Reut_A0870"/>
<dbReference type="eggNOG" id="COG2334">
    <property type="taxonomic scope" value="Bacteria"/>
</dbReference>
<dbReference type="HOGENOM" id="CLU_053300_0_0_4"/>
<dbReference type="OrthoDB" id="9777460at2"/>
<dbReference type="UniPathway" id="UPA00050">
    <property type="reaction ID" value="UER00064"/>
</dbReference>
<dbReference type="GO" id="GO:0005524">
    <property type="term" value="F:ATP binding"/>
    <property type="evidence" value="ECO:0007669"/>
    <property type="project" value="UniProtKB-KW"/>
</dbReference>
<dbReference type="GO" id="GO:0004413">
    <property type="term" value="F:homoserine kinase activity"/>
    <property type="evidence" value="ECO:0007669"/>
    <property type="project" value="UniProtKB-UniRule"/>
</dbReference>
<dbReference type="GO" id="GO:0009088">
    <property type="term" value="P:threonine biosynthetic process"/>
    <property type="evidence" value="ECO:0007669"/>
    <property type="project" value="UniProtKB-UniRule"/>
</dbReference>
<dbReference type="CDD" id="cd05153">
    <property type="entry name" value="HomoserineK_II"/>
    <property type="match status" value="1"/>
</dbReference>
<dbReference type="Gene3D" id="3.90.1200.10">
    <property type="match status" value="1"/>
</dbReference>
<dbReference type="Gene3D" id="3.30.200.20">
    <property type="entry name" value="Phosphorylase Kinase, domain 1"/>
    <property type="match status" value="1"/>
</dbReference>
<dbReference type="HAMAP" id="MF_00301">
    <property type="entry name" value="Homoser_kinase_2"/>
    <property type="match status" value="1"/>
</dbReference>
<dbReference type="InterPro" id="IPR002575">
    <property type="entry name" value="Aminoglycoside_PTrfase"/>
</dbReference>
<dbReference type="InterPro" id="IPR005280">
    <property type="entry name" value="Homoserine_kinase_II"/>
</dbReference>
<dbReference type="InterPro" id="IPR011009">
    <property type="entry name" value="Kinase-like_dom_sf"/>
</dbReference>
<dbReference type="InterPro" id="IPR050249">
    <property type="entry name" value="Pseudomonas-type_ThrB"/>
</dbReference>
<dbReference type="NCBIfam" id="NF003558">
    <property type="entry name" value="PRK05231.1"/>
    <property type="match status" value="1"/>
</dbReference>
<dbReference type="NCBIfam" id="TIGR00938">
    <property type="entry name" value="thrB_alt"/>
    <property type="match status" value="1"/>
</dbReference>
<dbReference type="PANTHER" id="PTHR21064:SF6">
    <property type="entry name" value="AMINOGLYCOSIDE PHOSPHOTRANSFERASE DOMAIN-CONTAINING PROTEIN"/>
    <property type="match status" value="1"/>
</dbReference>
<dbReference type="PANTHER" id="PTHR21064">
    <property type="entry name" value="AMINOGLYCOSIDE PHOSPHOTRANSFERASE DOMAIN-CONTAINING PROTEIN-RELATED"/>
    <property type="match status" value="1"/>
</dbReference>
<dbReference type="Pfam" id="PF01636">
    <property type="entry name" value="APH"/>
    <property type="match status" value="1"/>
</dbReference>
<dbReference type="SUPFAM" id="SSF56112">
    <property type="entry name" value="Protein kinase-like (PK-like)"/>
    <property type="match status" value="1"/>
</dbReference>
<feature type="chain" id="PRO_0000300799" description="Homoserine kinase">
    <location>
        <begin position="1"/>
        <end position="330"/>
    </location>
</feature>
<accession>Q474D4</accession>
<name>KHSE_CUPPJ</name>
<proteinExistence type="inferred from homology"/>
<organism>
    <name type="scientific">Cupriavidus pinatubonensis (strain JMP 134 / LMG 1197)</name>
    <name type="common">Cupriavidus necator (strain JMP 134)</name>
    <dbReference type="NCBI Taxonomy" id="264198"/>
    <lineage>
        <taxon>Bacteria</taxon>
        <taxon>Pseudomonadati</taxon>
        <taxon>Pseudomonadota</taxon>
        <taxon>Betaproteobacteria</taxon>
        <taxon>Burkholderiales</taxon>
        <taxon>Burkholderiaceae</taxon>
        <taxon>Cupriavidus</taxon>
    </lineage>
</organism>
<gene>
    <name evidence="1" type="primary">thrB</name>
    <name type="ordered locus">Reut_A0870</name>
</gene>
<keyword id="KW-0028">Amino-acid biosynthesis</keyword>
<keyword id="KW-0067">ATP-binding</keyword>
<keyword id="KW-0418">Kinase</keyword>
<keyword id="KW-0547">Nucleotide-binding</keyword>
<keyword id="KW-0791">Threonine biosynthesis</keyword>
<keyword id="KW-0808">Transferase</keyword>